<reference key="1">
    <citation type="journal article" date="1994" name="Biochim. Biophys. Acta">
        <title>A gene of Acinetobacter calcoaceticus BD413 encodes a periplasmic peptidyl-prolyl cis-trans isomerase of the cyclophilin sub-class that is not essential for growth.</title>
        <authorList>
            <person name="Kok R.G."/>
            <person name="Christoffels V.M."/>
            <person name="Vosman B."/>
            <person name="Hellingwerf K.J."/>
        </authorList>
    </citation>
    <scope>NUCLEOTIDE SEQUENCE [GENOMIC DNA]</scope>
</reference>
<reference key="2">
    <citation type="journal article" date="2004" name="Nucleic Acids Res.">
        <title>Unique features revealed by the genome sequence of Acinetobacter sp. ADP1, a versatile and naturally transformation competent bacterium.</title>
        <authorList>
            <person name="Barbe V."/>
            <person name="Vallenet D."/>
            <person name="Fonknechten N."/>
            <person name="Kreimeyer A."/>
            <person name="Oztas S."/>
            <person name="Labarre L."/>
            <person name="Cruveiller S."/>
            <person name="Robert C."/>
            <person name="Duprat S."/>
            <person name="Wincker P."/>
            <person name="Ornston L.N."/>
            <person name="Weissenbach J."/>
            <person name="Marliere P."/>
            <person name="Cohen G.N."/>
            <person name="Medigue C."/>
        </authorList>
    </citation>
    <scope>NUCLEOTIDE SEQUENCE [LARGE SCALE GENOMIC DNA]</scope>
    <source>
        <strain>ATCC 33305 / BD413 / ADP1</strain>
    </source>
</reference>
<comment type="function">
    <text>PPIases accelerate the folding of proteins. It catalyzes the cis-trans isomerization of proline imidic peptide bonds in oligopeptides. This protein is not essential for growth. Presumably plays a role in signal transduction.</text>
</comment>
<comment type="catalytic activity">
    <reaction>
        <text>[protein]-peptidylproline (omega=180) = [protein]-peptidylproline (omega=0)</text>
        <dbReference type="Rhea" id="RHEA:16237"/>
        <dbReference type="Rhea" id="RHEA-COMP:10747"/>
        <dbReference type="Rhea" id="RHEA-COMP:10748"/>
        <dbReference type="ChEBI" id="CHEBI:83833"/>
        <dbReference type="ChEBI" id="CHEBI:83834"/>
        <dbReference type="EC" id="5.2.1.8"/>
    </reaction>
</comment>
<comment type="subcellular location">
    <subcellularLocation>
        <location evidence="3">Periplasm</location>
    </subcellularLocation>
</comment>
<comment type="similarity">
    <text evidence="3">Belongs to the cyclophilin-type PPIase family.</text>
</comment>
<dbReference type="EC" id="5.2.1.8"/>
<dbReference type="EMBL" id="X74839">
    <property type="protein sequence ID" value="CAA52834.1"/>
    <property type="molecule type" value="Genomic_DNA"/>
</dbReference>
<dbReference type="EMBL" id="CR543861">
    <property type="protein sequence ID" value="CAG70278.1"/>
    <property type="molecule type" value="Genomic_DNA"/>
</dbReference>
<dbReference type="PIR" id="S50205">
    <property type="entry name" value="S50205"/>
</dbReference>
<dbReference type="RefSeq" id="WP_004930172.1">
    <property type="nucleotide sequence ID" value="NC_005966.1"/>
</dbReference>
<dbReference type="SMR" id="P42693"/>
<dbReference type="STRING" id="202950.GCA_001485005_03209"/>
<dbReference type="GeneID" id="45235810"/>
<dbReference type="KEGG" id="aci:ACIAD3647"/>
<dbReference type="eggNOG" id="COG0652">
    <property type="taxonomic scope" value="Bacteria"/>
</dbReference>
<dbReference type="HOGENOM" id="CLU_012062_16_9_6"/>
<dbReference type="OrthoDB" id="9807797at2"/>
<dbReference type="BioCyc" id="ASP62977:ACIAD_RS16500-MONOMER"/>
<dbReference type="Proteomes" id="UP000000430">
    <property type="component" value="Chromosome"/>
</dbReference>
<dbReference type="GO" id="GO:0042597">
    <property type="term" value="C:periplasmic space"/>
    <property type="evidence" value="ECO:0007669"/>
    <property type="project" value="UniProtKB-SubCell"/>
</dbReference>
<dbReference type="GO" id="GO:0003755">
    <property type="term" value="F:peptidyl-prolyl cis-trans isomerase activity"/>
    <property type="evidence" value="ECO:0007669"/>
    <property type="project" value="UniProtKB-KW"/>
</dbReference>
<dbReference type="GO" id="GO:0006457">
    <property type="term" value="P:protein folding"/>
    <property type="evidence" value="ECO:0007669"/>
    <property type="project" value="InterPro"/>
</dbReference>
<dbReference type="CDD" id="cd01920">
    <property type="entry name" value="cyclophilin_EcCYP_like"/>
    <property type="match status" value="1"/>
</dbReference>
<dbReference type="Gene3D" id="2.40.100.10">
    <property type="entry name" value="Cyclophilin-like"/>
    <property type="match status" value="1"/>
</dbReference>
<dbReference type="InterPro" id="IPR029000">
    <property type="entry name" value="Cyclophilin-like_dom_sf"/>
</dbReference>
<dbReference type="InterPro" id="IPR020892">
    <property type="entry name" value="Cyclophilin-type_PPIase_CS"/>
</dbReference>
<dbReference type="InterPro" id="IPR002130">
    <property type="entry name" value="Cyclophilin-type_PPIase_dom"/>
</dbReference>
<dbReference type="InterPro" id="IPR044665">
    <property type="entry name" value="E_coli_cyclophilin_A-like"/>
</dbReference>
<dbReference type="PANTHER" id="PTHR43246">
    <property type="entry name" value="PEPTIDYL-PROLYL CIS-TRANS ISOMERASE CYP38, CHLOROPLASTIC"/>
    <property type="match status" value="1"/>
</dbReference>
<dbReference type="Pfam" id="PF00160">
    <property type="entry name" value="Pro_isomerase"/>
    <property type="match status" value="1"/>
</dbReference>
<dbReference type="PRINTS" id="PR00153">
    <property type="entry name" value="CSAPPISMRASE"/>
</dbReference>
<dbReference type="SUPFAM" id="SSF50891">
    <property type="entry name" value="Cyclophilin-like"/>
    <property type="match status" value="1"/>
</dbReference>
<dbReference type="PROSITE" id="PS00170">
    <property type="entry name" value="CSA_PPIASE_1"/>
    <property type="match status" value="1"/>
</dbReference>
<dbReference type="PROSITE" id="PS50072">
    <property type="entry name" value="CSA_PPIASE_2"/>
    <property type="match status" value="1"/>
</dbReference>
<proteinExistence type="inferred from homology"/>
<feature type="signal peptide" evidence="1">
    <location>
        <begin position="1"/>
        <end position="20"/>
    </location>
</feature>
<feature type="chain" id="PRO_0000025499" description="Peptidyl-prolyl cis-trans isomerase">
    <location>
        <begin position="21"/>
        <end position="188"/>
    </location>
</feature>
<feature type="domain" description="PPIase cyclophilin-type" evidence="2">
    <location>
        <begin position="21"/>
        <end position="181"/>
    </location>
</feature>
<gene>
    <name type="primary">rotA</name>
    <name type="synonym">ppiA</name>
    <name type="ordered locus">ACIAD3647</name>
</gene>
<keyword id="KW-0413">Isomerase</keyword>
<keyword id="KW-0574">Periplasm</keyword>
<keyword id="KW-0697">Rotamase</keyword>
<keyword id="KW-0732">Signal</keyword>
<protein>
    <recommendedName>
        <fullName>Peptidyl-prolyl cis-trans isomerase</fullName>
        <shortName>PPIase</shortName>
        <ecNumber>5.2.1.8</ecNumber>
    </recommendedName>
    <alternativeName>
        <fullName>Rotamase</fullName>
    </alternativeName>
</protein>
<sequence>MLKRVAIVLGGLLISAHALANTMVEMKTNLGNIEIELYNNKAPISAKNFESYVKNNFYNGTIFHRVIPNFMIQGGGFETNMKEKATAAPIKNEASNGLANTRGTLAMARTSNPDSATSQFFINVADNNFLNASRTDAGYAVFGKVIKGMDVVDKIANVPTSTYGMHQNVPKQPVKIISVQIKSINTAK</sequence>
<accession>P42693</accession>
<evidence type="ECO:0000255" key="1"/>
<evidence type="ECO:0000255" key="2">
    <source>
        <dbReference type="PROSITE-ProRule" id="PRU00156"/>
    </source>
</evidence>
<evidence type="ECO:0000305" key="3"/>
<organism>
    <name type="scientific">Acinetobacter baylyi (strain ATCC 33305 / BD413 / ADP1)</name>
    <dbReference type="NCBI Taxonomy" id="62977"/>
    <lineage>
        <taxon>Bacteria</taxon>
        <taxon>Pseudomonadati</taxon>
        <taxon>Pseudomonadota</taxon>
        <taxon>Gammaproteobacteria</taxon>
        <taxon>Moraxellales</taxon>
        <taxon>Moraxellaceae</taxon>
        <taxon>Acinetobacter</taxon>
    </lineage>
</organism>
<name>PPIA_ACIAD</name>